<feature type="signal peptide" evidence="1">
    <location>
        <begin position="1"/>
        <end position="24"/>
    </location>
</feature>
<feature type="chain" id="PRO_0000006423" description="Cuticle collagen 8">
    <location>
        <begin position="25"/>
        <end position="282"/>
    </location>
</feature>
<feature type="region of interest" description="Disordered" evidence="2">
    <location>
        <begin position="86"/>
        <end position="282"/>
    </location>
</feature>
<feature type="region of interest" description="Triple-helical region">
    <location>
        <begin position="95"/>
        <end position="124"/>
    </location>
</feature>
<feature type="region of interest" description="Triple-helical region">
    <location>
        <begin position="141"/>
        <end position="269"/>
    </location>
</feature>
<feature type="compositionally biased region" description="Gly residues" evidence="2">
    <location>
        <begin position="170"/>
        <end position="180"/>
    </location>
</feature>
<feature type="compositionally biased region" description="Pro residues" evidence="2">
    <location>
        <begin position="214"/>
        <end position="224"/>
    </location>
</feature>
<feature type="compositionally biased region" description="Gly residues" evidence="2">
    <location>
        <begin position="225"/>
        <end position="234"/>
    </location>
</feature>
<feature type="compositionally biased region" description="Low complexity" evidence="2">
    <location>
        <begin position="235"/>
        <end position="244"/>
    </location>
</feature>
<feature type="sequence conflict" description="In Ref. 1; AAA27993." evidence="3" ref="1">
    <original>R</original>
    <variation>T</variation>
    <location>
        <position position="43"/>
    </location>
</feature>
<feature type="sequence conflict" description="In Ref. 1; AAA27993." evidence="3" ref="1">
    <original>R</original>
    <variation>C</variation>
    <location>
        <position position="142"/>
    </location>
</feature>
<feature type="sequence conflict" description="In Ref. 1; AAA27993." evidence="3" ref="1">
    <original>R</original>
    <variation>C</variation>
    <location>
        <position position="190"/>
    </location>
</feature>
<accession>P18833</accession>
<accession>Q19359</accession>
<reference key="1">
    <citation type="journal article" date="1989" name="Gene">
        <title>Sequence comparisons of developmentally regulated collagen genes of Caenorhabditis elegans.</title>
        <authorList>
            <person name="Cox G.N."/>
            <person name="Fields C."/>
            <person name="Kramer J.M."/>
            <person name="Rosenzweig B."/>
            <person name="Hirsh D."/>
        </authorList>
    </citation>
    <scope>NUCLEOTIDE SEQUENCE [GENOMIC DNA]</scope>
    <source>
        <strain>Bristol N2</strain>
    </source>
</reference>
<reference key="2">
    <citation type="journal article" date="1998" name="Science">
        <title>Genome sequence of the nematode C. elegans: a platform for investigating biology.</title>
        <authorList>
            <consortium name="The C. elegans sequencing consortium"/>
        </authorList>
    </citation>
    <scope>NUCLEOTIDE SEQUENCE [LARGE SCALE GENOMIC DNA]</scope>
    <source>
        <strain>Bristol N2</strain>
    </source>
</reference>
<proteinExistence type="inferred from homology"/>
<comment type="function">
    <text>Nematode cuticles are composed largely of collagen-like proteins. The cuticle functions both as an exoskeleton and as a barrier to protect the worm from its environment.</text>
</comment>
<comment type="subunit">
    <text>Collagen polypeptide chains are complexed within the cuticle by disulfide bonds and other types of covalent cross-links.</text>
</comment>
<comment type="similarity">
    <text evidence="3">Belongs to the cuticular collagen family.</text>
</comment>
<evidence type="ECO:0000255" key="1"/>
<evidence type="ECO:0000256" key="2">
    <source>
        <dbReference type="SAM" id="MobiDB-lite"/>
    </source>
</evidence>
<evidence type="ECO:0000305" key="3"/>
<dbReference type="EMBL" id="M25479">
    <property type="protein sequence ID" value="AAA27993.1"/>
    <property type="molecule type" value="Genomic_DNA"/>
</dbReference>
<dbReference type="EMBL" id="FO080391">
    <property type="protein sequence ID" value="CCD63397.1"/>
    <property type="molecule type" value="Genomic_DNA"/>
</dbReference>
<dbReference type="PIR" id="JS0168">
    <property type="entry name" value="JS0168"/>
</dbReference>
<dbReference type="PIR" id="T16036">
    <property type="entry name" value="T16036"/>
</dbReference>
<dbReference type="RefSeq" id="NP_498533.2">
    <property type="nucleotide sequence ID" value="NM_066132.6"/>
</dbReference>
<dbReference type="BioGRID" id="41193">
    <property type="interactions" value="1"/>
</dbReference>
<dbReference type="FunCoup" id="P18833">
    <property type="interactions" value="989"/>
</dbReference>
<dbReference type="STRING" id="6239.F11H8.3.1"/>
<dbReference type="PaxDb" id="6239-F11H8.3"/>
<dbReference type="PeptideAtlas" id="P18833"/>
<dbReference type="EnsemblMetazoa" id="F11H8.3.1">
    <property type="protein sequence ID" value="F11H8.3.1"/>
    <property type="gene ID" value="WBGene00000597"/>
</dbReference>
<dbReference type="UCSC" id="F11H8.3">
    <property type="organism name" value="c. elegans"/>
</dbReference>
<dbReference type="AGR" id="WB:WBGene00000597"/>
<dbReference type="WormBase" id="F11H8.3">
    <property type="protein sequence ID" value="CE51260"/>
    <property type="gene ID" value="WBGene00000597"/>
    <property type="gene designation" value="col-8"/>
</dbReference>
<dbReference type="eggNOG" id="KOG3544">
    <property type="taxonomic scope" value="Eukaryota"/>
</dbReference>
<dbReference type="GeneTree" id="ENSGT00970000196588"/>
<dbReference type="HOGENOM" id="CLU_001074_4_3_1"/>
<dbReference type="InParanoid" id="P18833"/>
<dbReference type="OMA" id="DEMFEFR"/>
<dbReference type="OrthoDB" id="5877755at2759"/>
<dbReference type="PRO" id="PR:P18833"/>
<dbReference type="Proteomes" id="UP000001940">
    <property type="component" value="Chromosome III"/>
</dbReference>
<dbReference type="Bgee" id="WBGene00000597">
    <property type="expression patterns" value="Expressed in adult organism and 2 other cell types or tissues"/>
</dbReference>
<dbReference type="GO" id="GO:0005581">
    <property type="term" value="C:collagen trimer"/>
    <property type="evidence" value="ECO:0007669"/>
    <property type="project" value="UniProtKB-KW"/>
</dbReference>
<dbReference type="GO" id="GO:0042302">
    <property type="term" value="F:structural constituent of cuticle"/>
    <property type="evidence" value="ECO:0007669"/>
    <property type="project" value="UniProtKB-KW"/>
</dbReference>
<dbReference type="InterPro" id="IPR002486">
    <property type="entry name" value="Col_cuticle_N"/>
</dbReference>
<dbReference type="PANTHER" id="PTHR24637">
    <property type="entry name" value="COLLAGEN"/>
    <property type="match status" value="1"/>
</dbReference>
<dbReference type="PANTHER" id="PTHR24637:SF360">
    <property type="entry name" value="CUTICLE COLLAGEN 8"/>
    <property type="match status" value="1"/>
</dbReference>
<dbReference type="Pfam" id="PF01484">
    <property type="entry name" value="Col_cuticle_N"/>
    <property type="match status" value="1"/>
</dbReference>
<dbReference type="SMART" id="SM01088">
    <property type="entry name" value="Col_cuticle_N"/>
    <property type="match status" value="1"/>
</dbReference>
<organism>
    <name type="scientific">Caenorhabditis elegans</name>
    <dbReference type="NCBI Taxonomy" id="6239"/>
    <lineage>
        <taxon>Eukaryota</taxon>
        <taxon>Metazoa</taxon>
        <taxon>Ecdysozoa</taxon>
        <taxon>Nematoda</taxon>
        <taxon>Chromadorea</taxon>
        <taxon>Rhabditida</taxon>
        <taxon>Rhabditina</taxon>
        <taxon>Rhabditomorpha</taxon>
        <taxon>Rhabditoidea</taxon>
        <taxon>Rhabditidae</taxon>
        <taxon>Peloderinae</taxon>
        <taxon>Caenorhabditis</taxon>
    </lineage>
</organism>
<keyword id="KW-0176">Collagen</keyword>
<keyword id="KW-0193">Cuticle</keyword>
<keyword id="KW-1015">Disulfide bond</keyword>
<keyword id="KW-1185">Reference proteome</keyword>
<keyword id="KW-0677">Repeat</keyword>
<keyword id="KW-0732">Signal</keyword>
<gene>
    <name type="primary">col-8</name>
    <name type="ORF">F11H8.3</name>
</gene>
<name>COL8_CAEEL</name>
<protein>
    <recommendedName>
        <fullName>Cuticle collagen 8</fullName>
    </recommendedName>
</protein>
<sequence length="282" mass="28150">MLVCVFVALYTMMGLLTDIKQLQSDFDDEMFEFRAITKDTWQRIVTKHTYPGGVDEETIESHPPTFETLFGTRKARQAYPEQCNCGPKSEGCPAGPPGPPGEGGQSGEPGHDGDDGKPGAPGVIVAITHDIPGGCIKCPPGRPGPRGPSGLVGPAGPAGDQGRHGPPGPTGGQGGPGEQGDAGRPGAAGRPGPPGPRGEPGTEYRPGQAGRAGPPGPRGPPGPEGNPGGAGEDGNQGPVGHPGVPGRPGIPGKSGTCGEHGGPGEPGPDAGYCPCPGRSYKA</sequence>